<evidence type="ECO:0000255" key="1">
    <source>
        <dbReference type="HAMAP-Rule" id="MF_00384"/>
    </source>
</evidence>
<accession>B1KS25</accession>
<feature type="chain" id="PRO_1000122413" description="Homoserine kinase">
    <location>
        <begin position="1"/>
        <end position="297"/>
    </location>
</feature>
<feature type="binding site" evidence="1">
    <location>
        <begin position="82"/>
        <end position="92"/>
    </location>
    <ligand>
        <name>ATP</name>
        <dbReference type="ChEBI" id="CHEBI:30616"/>
    </ligand>
</feature>
<proteinExistence type="inferred from homology"/>
<sequence>MVEVRVPATSANIGPGFDCLGVAVNMYNKFFVEEIEEGLIFEGCADKFKNENNLIYVAMKKCFNKIGYKPTGLRIKIESDIPVSRGLGSSAACVVGGIVSANELAGGALNKKELLDLAVEVEGHPDNVNPAFCGGMTASISDNREVIYSKVKVSEGIKFCALIPDFTLSTEKARAVLPKSIDYKDGIFNVGRTALMISALNNGDFHLIKYACKDKLHQDHRAKLIENFYSIKKQCEKLNSLGVFLSGAGPTIMVMLREEDKDFSKNIKSFLETLKNKWEVRELKIDKLGTVVNNRKV</sequence>
<organism>
    <name type="scientific">Clostridium botulinum (strain Loch Maree / Type A3)</name>
    <dbReference type="NCBI Taxonomy" id="498214"/>
    <lineage>
        <taxon>Bacteria</taxon>
        <taxon>Bacillati</taxon>
        <taxon>Bacillota</taxon>
        <taxon>Clostridia</taxon>
        <taxon>Eubacteriales</taxon>
        <taxon>Clostridiaceae</taxon>
        <taxon>Clostridium</taxon>
    </lineage>
</organism>
<name>KHSE_CLOBM</name>
<keyword id="KW-0028">Amino-acid biosynthesis</keyword>
<keyword id="KW-0067">ATP-binding</keyword>
<keyword id="KW-0963">Cytoplasm</keyword>
<keyword id="KW-0418">Kinase</keyword>
<keyword id="KW-0547">Nucleotide-binding</keyword>
<keyword id="KW-0791">Threonine biosynthesis</keyword>
<keyword id="KW-0808">Transferase</keyword>
<protein>
    <recommendedName>
        <fullName evidence="1">Homoserine kinase</fullName>
        <shortName evidence="1">HK</shortName>
        <shortName evidence="1">HSK</shortName>
        <ecNumber evidence="1">2.7.1.39</ecNumber>
    </recommendedName>
</protein>
<gene>
    <name evidence="1" type="primary">thrB</name>
    <name type="ordered locus">CLK_1103</name>
</gene>
<dbReference type="EC" id="2.7.1.39" evidence="1"/>
<dbReference type="EMBL" id="CP000962">
    <property type="protein sequence ID" value="ACA55240.1"/>
    <property type="molecule type" value="Genomic_DNA"/>
</dbReference>
<dbReference type="RefSeq" id="WP_012343248.1">
    <property type="nucleotide sequence ID" value="NC_010520.1"/>
</dbReference>
<dbReference type="SMR" id="B1KS25"/>
<dbReference type="KEGG" id="cbl:CLK_1103"/>
<dbReference type="HOGENOM" id="CLU_041243_0_2_9"/>
<dbReference type="UniPathway" id="UPA00050">
    <property type="reaction ID" value="UER00064"/>
</dbReference>
<dbReference type="GO" id="GO:0005737">
    <property type="term" value="C:cytoplasm"/>
    <property type="evidence" value="ECO:0007669"/>
    <property type="project" value="UniProtKB-SubCell"/>
</dbReference>
<dbReference type="GO" id="GO:0005524">
    <property type="term" value="F:ATP binding"/>
    <property type="evidence" value="ECO:0007669"/>
    <property type="project" value="UniProtKB-UniRule"/>
</dbReference>
<dbReference type="GO" id="GO:0004413">
    <property type="term" value="F:homoserine kinase activity"/>
    <property type="evidence" value="ECO:0007669"/>
    <property type="project" value="UniProtKB-UniRule"/>
</dbReference>
<dbReference type="GO" id="GO:0009088">
    <property type="term" value="P:threonine biosynthetic process"/>
    <property type="evidence" value="ECO:0007669"/>
    <property type="project" value="UniProtKB-UniRule"/>
</dbReference>
<dbReference type="Gene3D" id="3.30.230.10">
    <property type="match status" value="1"/>
</dbReference>
<dbReference type="Gene3D" id="3.30.70.890">
    <property type="entry name" value="GHMP kinase, C-terminal domain"/>
    <property type="match status" value="1"/>
</dbReference>
<dbReference type="HAMAP" id="MF_00384">
    <property type="entry name" value="Homoser_kinase"/>
    <property type="match status" value="1"/>
</dbReference>
<dbReference type="InterPro" id="IPR013750">
    <property type="entry name" value="GHMP_kinase_C_dom"/>
</dbReference>
<dbReference type="InterPro" id="IPR036554">
    <property type="entry name" value="GHMP_kinase_C_sf"/>
</dbReference>
<dbReference type="InterPro" id="IPR006204">
    <property type="entry name" value="GHMP_kinase_N_dom"/>
</dbReference>
<dbReference type="InterPro" id="IPR006203">
    <property type="entry name" value="GHMP_knse_ATP-bd_CS"/>
</dbReference>
<dbReference type="InterPro" id="IPR000870">
    <property type="entry name" value="Homoserine_kinase"/>
</dbReference>
<dbReference type="InterPro" id="IPR020568">
    <property type="entry name" value="Ribosomal_Su5_D2-typ_SF"/>
</dbReference>
<dbReference type="InterPro" id="IPR014721">
    <property type="entry name" value="Ribsml_uS5_D2-typ_fold_subgr"/>
</dbReference>
<dbReference type="NCBIfam" id="NF002288">
    <property type="entry name" value="PRK01212.1-4"/>
    <property type="match status" value="1"/>
</dbReference>
<dbReference type="NCBIfam" id="TIGR00191">
    <property type="entry name" value="thrB"/>
    <property type="match status" value="1"/>
</dbReference>
<dbReference type="PANTHER" id="PTHR20861:SF1">
    <property type="entry name" value="HOMOSERINE KINASE"/>
    <property type="match status" value="1"/>
</dbReference>
<dbReference type="PANTHER" id="PTHR20861">
    <property type="entry name" value="HOMOSERINE/4-DIPHOSPHOCYTIDYL-2-C-METHYL-D-ERYTHRITOL KINASE"/>
    <property type="match status" value="1"/>
</dbReference>
<dbReference type="Pfam" id="PF08544">
    <property type="entry name" value="GHMP_kinases_C"/>
    <property type="match status" value="1"/>
</dbReference>
<dbReference type="Pfam" id="PF00288">
    <property type="entry name" value="GHMP_kinases_N"/>
    <property type="match status" value="1"/>
</dbReference>
<dbReference type="PIRSF" id="PIRSF000676">
    <property type="entry name" value="Homoser_kin"/>
    <property type="match status" value="1"/>
</dbReference>
<dbReference type="PRINTS" id="PR00958">
    <property type="entry name" value="HOMSERKINASE"/>
</dbReference>
<dbReference type="SUPFAM" id="SSF55060">
    <property type="entry name" value="GHMP Kinase, C-terminal domain"/>
    <property type="match status" value="1"/>
</dbReference>
<dbReference type="SUPFAM" id="SSF54211">
    <property type="entry name" value="Ribosomal protein S5 domain 2-like"/>
    <property type="match status" value="1"/>
</dbReference>
<dbReference type="PROSITE" id="PS00627">
    <property type="entry name" value="GHMP_KINASES_ATP"/>
    <property type="match status" value="1"/>
</dbReference>
<comment type="function">
    <text evidence="1">Catalyzes the ATP-dependent phosphorylation of L-homoserine to L-homoserine phosphate.</text>
</comment>
<comment type="catalytic activity">
    <reaction evidence="1">
        <text>L-homoserine + ATP = O-phospho-L-homoserine + ADP + H(+)</text>
        <dbReference type="Rhea" id="RHEA:13985"/>
        <dbReference type="ChEBI" id="CHEBI:15378"/>
        <dbReference type="ChEBI" id="CHEBI:30616"/>
        <dbReference type="ChEBI" id="CHEBI:57476"/>
        <dbReference type="ChEBI" id="CHEBI:57590"/>
        <dbReference type="ChEBI" id="CHEBI:456216"/>
        <dbReference type="EC" id="2.7.1.39"/>
    </reaction>
</comment>
<comment type="pathway">
    <text evidence="1">Amino-acid biosynthesis; L-threonine biosynthesis; L-threonine from L-aspartate: step 4/5.</text>
</comment>
<comment type="subcellular location">
    <subcellularLocation>
        <location evidence="1">Cytoplasm</location>
    </subcellularLocation>
</comment>
<comment type="similarity">
    <text evidence="1">Belongs to the GHMP kinase family. Homoserine kinase subfamily.</text>
</comment>
<reference key="1">
    <citation type="journal article" date="2007" name="PLoS ONE">
        <title>Analysis of the neurotoxin complex genes in Clostridium botulinum A1-A4 and B1 strains: BoNT/A3, /Ba4 and /B1 clusters are located within plasmids.</title>
        <authorList>
            <person name="Smith T.J."/>
            <person name="Hill K.K."/>
            <person name="Foley B.T."/>
            <person name="Detter J.C."/>
            <person name="Munk A.C."/>
            <person name="Bruce D.C."/>
            <person name="Doggett N.A."/>
            <person name="Smith L.A."/>
            <person name="Marks J.D."/>
            <person name="Xie G."/>
            <person name="Brettin T.S."/>
        </authorList>
    </citation>
    <scope>NUCLEOTIDE SEQUENCE [LARGE SCALE GENOMIC DNA]</scope>
    <source>
        <strain>Loch Maree / Type A3</strain>
    </source>
</reference>